<name>NA17A_ANTS7</name>
<proteinExistence type="evidence at transcript level"/>
<reference key="1">
    <citation type="journal article" date="2004" name="Biochem. Biophys. Res. Commun.">
        <title>Functional expression and characterization of four novel neurotoxins from sea anemone Anthopleura sp.</title>
        <authorList>
            <person name="Wang L."/>
            <person name="Ou J."/>
            <person name="Peng L."/>
            <person name="Zhong X."/>
            <person name="Du J."/>
            <person name="Liu Y."/>
            <person name="Huang Y."/>
            <person name="Liu W."/>
            <person name="Zhang Y."/>
            <person name="Dong M."/>
            <person name="Xu A.-L."/>
        </authorList>
    </citation>
    <scope>NUCLEOTIDE SEQUENCE [MRNA]</scope>
    <scope>FUNCTION</scope>
    <source>
        <tissue>Tentacle</tissue>
    </source>
</reference>
<reference key="2">
    <citation type="journal article" date="2012" name="Toxicon">
        <title>Development of a rational nomenclature for naming peptide and protein toxins from sea anemones.</title>
        <authorList>
            <person name="Oliveira J.S."/>
            <person name="Fuentes-Silva D."/>
            <person name="King G.F."/>
        </authorList>
    </citation>
    <scope>NOMENCLATURE</scope>
</reference>
<sequence>GVPCLCDSDGPSVHGNTLSGTIWLAGCPSGWHNCKAHGPTIGWCCKK</sequence>
<organism>
    <name type="scientific">Anthopleura sp. (strain 'Zhanjiang')</name>
    <name type="common">Sea anemone</name>
    <dbReference type="NCBI Taxonomy" id="462333"/>
    <lineage>
        <taxon>Eukaryota</taxon>
        <taxon>Metazoa</taxon>
        <taxon>Cnidaria</taxon>
        <taxon>Anthozoa</taxon>
        <taxon>Hexacorallia</taxon>
        <taxon>Actiniaria</taxon>
        <taxon>Actiniidae</taxon>
        <taxon>Anthopleura</taxon>
    </lineage>
</organism>
<accession>P0C5F5</accession>
<dbReference type="SMR" id="P0C5F5"/>
<dbReference type="GO" id="GO:0005576">
    <property type="term" value="C:extracellular region"/>
    <property type="evidence" value="ECO:0007669"/>
    <property type="project" value="UniProtKB-SubCell"/>
</dbReference>
<dbReference type="GO" id="GO:0042151">
    <property type="term" value="C:nematocyst"/>
    <property type="evidence" value="ECO:0007669"/>
    <property type="project" value="UniProtKB-SubCell"/>
</dbReference>
<dbReference type="GO" id="GO:0017080">
    <property type="term" value="F:sodium channel regulator activity"/>
    <property type="evidence" value="ECO:0007669"/>
    <property type="project" value="UniProtKB-KW"/>
</dbReference>
<dbReference type="GO" id="GO:0090729">
    <property type="term" value="F:toxin activity"/>
    <property type="evidence" value="ECO:0007669"/>
    <property type="project" value="UniProtKB-KW"/>
</dbReference>
<dbReference type="GO" id="GO:0009966">
    <property type="term" value="P:regulation of signal transduction"/>
    <property type="evidence" value="ECO:0007669"/>
    <property type="project" value="InterPro"/>
</dbReference>
<dbReference type="Gene3D" id="2.20.20.10">
    <property type="entry name" value="Anthopleurin-A"/>
    <property type="match status" value="1"/>
</dbReference>
<dbReference type="InterPro" id="IPR000693">
    <property type="entry name" value="Anenome_toxin"/>
</dbReference>
<dbReference type="InterPro" id="IPR023355">
    <property type="entry name" value="Myo_ane_neurotoxin_sf"/>
</dbReference>
<dbReference type="Pfam" id="PF00706">
    <property type="entry name" value="Toxin_4"/>
    <property type="match status" value="1"/>
</dbReference>
<dbReference type="PIRSF" id="PIRSF001905">
    <property type="entry name" value="Anenome_toxin"/>
    <property type="match status" value="1"/>
</dbReference>
<dbReference type="SUPFAM" id="SSF57392">
    <property type="entry name" value="Defensin-like"/>
    <property type="match status" value="1"/>
</dbReference>
<protein>
    <recommendedName>
        <fullName evidence="5">Delta-actitoxin-Aspp1b</fullName>
        <shortName evidence="5">Delta-AITX-Aspp1b</shortName>
    </recommendedName>
    <alternativeName>
        <fullName evidence="4">Toxin Hk7a</fullName>
    </alternativeName>
</protein>
<keyword id="KW-0123">Cardiotoxin</keyword>
<keyword id="KW-1015">Disulfide bond</keyword>
<keyword id="KW-0872">Ion channel impairing toxin</keyword>
<keyword id="KW-0166">Nematocyst</keyword>
<keyword id="KW-0528">Neurotoxin</keyword>
<keyword id="KW-0964">Secreted</keyword>
<keyword id="KW-0800">Toxin</keyword>
<keyword id="KW-0738">Voltage-gated sodium channel impairing toxin</keyword>
<comment type="function">
    <text evidence="1 3">Binds specifically to voltage-gated sodium channels (Nav), thereby delaying their inactivation during signal transduction (By similarity). Has a longer mammalian heart stimulation effect than Hk2a, Hk8a and Hk16a (PubMed:14672713).</text>
</comment>
<comment type="subcellular location">
    <subcellularLocation>
        <location evidence="6">Secreted</location>
    </subcellularLocation>
    <subcellularLocation>
        <location evidence="6">Nematocyst</location>
    </subcellularLocation>
</comment>
<comment type="similarity">
    <text evidence="6">Belongs to the sea anemone sodium channel inhibitory toxin family. Type I subfamily.</text>
</comment>
<evidence type="ECO:0000250" key="1"/>
<evidence type="ECO:0000250" key="2">
    <source>
        <dbReference type="UniProtKB" id="P01530"/>
    </source>
</evidence>
<evidence type="ECO:0000269" key="3">
    <source>
    </source>
</evidence>
<evidence type="ECO:0000303" key="4">
    <source>
    </source>
</evidence>
<evidence type="ECO:0000303" key="5">
    <source>
    </source>
</evidence>
<evidence type="ECO:0000305" key="6"/>
<feature type="chain" id="PRO_0000305109" description="Delta-actitoxin-Aspp1b">
    <location>
        <begin position="1"/>
        <end position="47"/>
    </location>
</feature>
<feature type="disulfide bond" evidence="2">
    <location>
        <begin position="4"/>
        <end position="44"/>
    </location>
</feature>
<feature type="disulfide bond" evidence="2">
    <location>
        <begin position="6"/>
        <end position="34"/>
    </location>
</feature>
<feature type="disulfide bond" evidence="2">
    <location>
        <begin position="27"/>
        <end position="45"/>
    </location>
</feature>